<accession>Q18DI6</accession>
<organism>
    <name type="scientific">Haloquadratum walsbyi (strain DSM 16790 / HBSQ001)</name>
    <dbReference type="NCBI Taxonomy" id="362976"/>
    <lineage>
        <taxon>Archaea</taxon>
        <taxon>Methanobacteriati</taxon>
        <taxon>Methanobacteriota</taxon>
        <taxon>Stenosarchaea group</taxon>
        <taxon>Halobacteria</taxon>
        <taxon>Halobacteriales</taxon>
        <taxon>Haloferacaceae</taxon>
        <taxon>Haloquadratum</taxon>
    </lineage>
</organism>
<sequence>MYLGRFIIIGETTAVYRVSSRSYPNRQIISRDNMLTVVPTSEAAQTNNPYVSYNCMRQGGEKIVIGNGSHVDPIAEKIDRGYPARDALAEALLALDYEKDDYNTPRIAGIVGSSSYVGIIRQDAVIIRSISEPTLVSTYENDAPTTAQLSLKGDIEEIAQKAYELEYEHPVCAAAVTHQGQGESGDIVAQIYNGK</sequence>
<gene>
    <name evidence="1" type="primary">purO</name>
    <name type="ordered locus">HQ_1006A</name>
</gene>
<feature type="chain" id="PRO_0000349159" description="IMP cyclohydrolase">
    <location>
        <begin position="1"/>
        <end position="195"/>
    </location>
</feature>
<name>PURO_HALWD</name>
<reference key="1">
    <citation type="journal article" date="2006" name="BMC Genomics">
        <title>The genome of the square archaeon Haloquadratum walsbyi: life at the limits of water activity.</title>
        <authorList>
            <person name="Bolhuis H."/>
            <person name="Palm P."/>
            <person name="Wende A."/>
            <person name="Falb M."/>
            <person name="Rampp M."/>
            <person name="Rodriguez-Valera F."/>
            <person name="Pfeiffer F."/>
            <person name="Oesterhelt D."/>
        </authorList>
    </citation>
    <scope>NUCLEOTIDE SEQUENCE [LARGE SCALE GENOMIC DNA]</scope>
    <source>
        <strain>DSM 16790 / HBSQ001</strain>
    </source>
</reference>
<proteinExistence type="inferred from homology"/>
<comment type="function">
    <text evidence="1">Catalyzes the cyclization of 5-formylamidoimidazole-4-carboxamide ribonucleotide to IMP.</text>
</comment>
<comment type="catalytic activity">
    <reaction evidence="1">
        <text>IMP + H2O = 5-formamido-1-(5-phospho-D-ribosyl)imidazole-4-carboxamide</text>
        <dbReference type="Rhea" id="RHEA:18445"/>
        <dbReference type="ChEBI" id="CHEBI:15377"/>
        <dbReference type="ChEBI" id="CHEBI:58053"/>
        <dbReference type="ChEBI" id="CHEBI:58467"/>
        <dbReference type="EC" id="3.5.4.10"/>
    </reaction>
</comment>
<comment type="pathway">
    <text evidence="1">Purine metabolism; IMP biosynthesis via de novo pathway; IMP from 5-formamido-1-(5-phospho-D-ribosyl)imidazole-4-carboxamide: step 1/1.</text>
</comment>
<comment type="similarity">
    <text evidence="1">Belongs to the archaeal IMP cyclohydrolase family.</text>
</comment>
<evidence type="ECO:0000255" key="1">
    <source>
        <dbReference type="HAMAP-Rule" id="MF_00705"/>
    </source>
</evidence>
<dbReference type="EC" id="3.5.4.10" evidence="1"/>
<dbReference type="EMBL" id="AM180088">
    <property type="protein sequence ID" value="CAJ51136.1"/>
    <property type="molecule type" value="Genomic_DNA"/>
</dbReference>
<dbReference type="RefSeq" id="WP_011570303.1">
    <property type="nucleotide sequence ID" value="NC_008212.1"/>
</dbReference>
<dbReference type="SMR" id="Q18DI6"/>
<dbReference type="STRING" id="362976.HQ_1006A"/>
<dbReference type="GeneID" id="4194534"/>
<dbReference type="KEGG" id="hwa:HQ_1006A"/>
<dbReference type="eggNOG" id="arCOG04727">
    <property type="taxonomic scope" value="Archaea"/>
</dbReference>
<dbReference type="HOGENOM" id="CLU_1352116_0_0_2"/>
<dbReference type="UniPathway" id="UPA00074">
    <property type="reaction ID" value="UER00135"/>
</dbReference>
<dbReference type="Proteomes" id="UP000001975">
    <property type="component" value="Chromosome"/>
</dbReference>
<dbReference type="GO" id="GO:0003937">
    <property type="term" value="F:IMP cyclohydrolase activity"/>
    <property type="evidence" value="ECO:0007669"/>
    <property type="project" value="UniProtKB-UniRule"/>
</dbReference>
<dbReference type="GO" id="GO:0006189">
    <property type="term" value="P:'de novo' IMP biosynthetic process"/>
    <property type="evidence" value="ECO:0007669"/>
    <property type="project" value="UniProtKB-UniRule"/>
</dbReference>
<dbReference type="Gene3D" id="3.60.20.20">
    <property type="entry name" value="Inosine monophosphate cyclohydrolase-like"/>
    <property type="match status" value="1"/>
</dbReference>
<dbReference type="HAMAP" id="MF_00705">
    <property type="entry name" value="IMP_cyclohydrol"/>
    <property type="match status" value="1"/>
</dbReference>
<dbReference type="InterPro" id="IPR010191">
    <property type="entry name" value="IMP_cyclohydrolase"/>
</dbReference>
<dbReference type="InterPro" id="IPR020600">
    <property type="entry name" value="IMP_cyclohydrolase-like"/>
</dbReference>
<dbReference type="InterPro" id="IPR036795">
    <property type="entry name" value="IMP_cyclohydrolase-like_sf"/>
</dbReference>
<dbReference type="NCBIfam" id="NF003167">
    <property type="entry name" value="PRK04151.1"/>
    <property type="match status" value="1"/>
</dbReference>
<dbReference type="NCBIfam" id="TIGR01922">
    <property type="entry name" value="purO_arch"/>
    <property type="match status" value="1"/>
</dbReference>
<dbReference type="Pfam" id="PF07826">
    <property type="entry name" value="IMP_cyclohyd"/>
    <property type="match status" value="1"/>
</dbReference>
<dbReference type="PIRSF" id="PIRSF004866">
    <property type="entry name" value="IMP_cclhdr_arch"/>
    <property type="match status" value="1"/>
</dbReference>
<dbReference type="SUPFAM" id="SSF75569">
    <property type="entry name" value="Archaeal IMP cyclohydrolase PurO"/>
    <property type="match status" value="1"/>
</dbReference>
<keyword id="KW-0378">Hydrolase</keyword>
<keyword id="KW-0658">Purine biosynthesis</keyword>
<keyword id="KW-1185">Reference proteome</keyword>
<protein>
    <recommendedName>
        <fullName evidence="1">IMP cyclohydrolase</fullName>
        <ecNumber evidence="1">3.5.4.10</ecNumber>
    </recommendedName>
    <alternativeName>
        <fullName evidence="1">IMP synthase</fullName>
    </alternativeName>
    <alternativeName>
        <fullName evidence="1">Inosinicase</fullName>
    </alternativeName>
</protein>